<dbReference type="EMBL" id="CP000446">
    <property type="protein sequence ID" value="ABI40969.1"/>
    <property type="molecule type" value="Genomic_DNA"/>
</dbReference>
<dbReference type="RefSeq" id="WP_011624627.1">
    <property type="nucleotide sequence ID" value="NC_008321.1"/>
</dbReference>
<dbReference type="SMR" id="Q0HD98"/>
<dbReference type="KEGG" id="she:Shewmr4_3906"/>
<dbReference type="HOGENOM" id="CLU_033732_1_2_6"/>
<dbReference type="GO" id="GO:0005829">
    <property type="term" value="C:cytosol"/>
    <property type="evidence" value="ECO:0007669"/>
    <property type="project" value="TreeGrafter"/>
</dbReference>
<dbReference type="GO" id="GO:0005525">
    <property type="term" value="F:GTP binding"/>
    <property type="evidence" value="ECO:0007669"/>
    <property type="project" value="UniProtKB-UniRule"/>
</dbReference>
<dbReference type="GO" id="GO:0046872">
    <property type="term" value="F:metal ion binding"/>
    <property type="evidence" value="ECO:0007669"/>
    <property type="project" value="UniProtKB-KW"/>
</dbReference>
<dbReference type="GO" id="GO:0000917">
    <property type="term" value="P:division septum assembly"/>
    <property type="evidence" value="ECO:0007669"/>
    <property type="project" value="UniProtKB-KW"/>
</dbReference>
<dbReference type="CDD" id="cd01876">
    <property type="entry name" value="YihA_EngB"/>
    <property type="match status" value="1"/>
</dbReference>
<dbReference type="FunFam" id="3.40.50.300:FF:000098">
    <property type="entry name" value="Probable GTP-binding protein EngB"/>
    <property type="match status" value="1"/>
</dbReference>
<dbReference type="Gene3D" id="3.40.50.300">
    <property type="entry name" value="P-loop containing nucleotide triphosphate hydrolases"/>
    <property type="match status" value="1"/>
</dbReference>
<dbReference type="HAMAP" id="MF_00321">
    <property type="entry name" value="GTPase_EngB"/>
    <property type="match status" value="1"/>
</dbReference>
<dbReference type="InterPro" id="IPR030393">
    <property type="entry name" value="G_ENGB_dom"/>
</dbReference>
<dbReference type="InterPro" id="IPR006073">
    <property type="entry name" value="GTP-bd"/>
</dbReference>
<dbReference type="InterPro" id="IPR019987">
    <property type="entry name" value="GTP-bd_ribosome_bio_YsxC"/>
</dbReference>
<dbReference type="InterPro" id="IPR027417">
    <property type="entry name" value="P-loop_NTPase"/>
</dbReference>
<dbReference type="NCBIfam" id="TIGR03598">
    <property type="entry name" value="GTPase_YsxC"/>
    <property type="match status" value="1"/>
</dbReference>
<dbReference type="PANTHER" id="PTHR11649:SF13">
    <property type="entry name" value="ENGB-TYPE G DOMAIN-CONTAINING PROTEIN"/>
    <property type="match status" value="1"/>
</dbReference>
<dbReference type="PANTHER" id="PTHR11649">
    <property type="entry name" value="MSS1/TRME-RELATED GTP-BINDING PROTEIN"/>
    <property type="match status" value="1"/>
</dbReference>
<dbReference type="Pfam" id="PF01926">
    <property type="entry name" value="MMR_HSR1"/>
    <property type="match status" value="1"/>
</dbReference>
<dbReference type="SUPFAM" id="SSF52540">
    <property type="entry name" value="P-loop containing nucleoside triphosphate hydrolases"/>
    <property type="match status" value="1"/>
</dbReference>
<dbReference type="PROSITE" id="PS51706">
    <property type="entry name" value="G_ENGB"/>
    <property type="match status" value="1"/>
</dbReference>
<feature type="chain" id="PRO_0000266945" description="Probable GTP-binding protein EngB">
    <location>
        <begin position="1"/>
        <end position="219"/>
    </location>
</feature>
<feature type="domain" description="EngB-type G" evidence="1">
    <location>
        <begin position="31"/>
        <end position="205"/>
    </location>
</feature>
<feature type="binding site" evidence="1">
    <location>
        <begin position="39"/>
        <end position="46"/>
    </location>
    <ligand>
        <name>GTP</name>
        <dbReference type="ChEBI" id="CHEBI:37565"/>
    </ligand>
</feature>
<feature type="binding site" evidence="1">
    <location>
        <position position="46"/>
    </location>
    <ligand>
        <name>Mg(2+)</name>
        <dbReference type="ChEBI" id="CHEBI:18420"/>
    </ligand>
</feature>
<feature type="binding site" evidence="1">
    <location>
        <begin position="66"/>
        <end position="70"/>
    </location>
    <ligand>
        <name>GTP</name>
        <dbReference type="ChEBI" id="CHEBI:37565"/>
    </ligand>
</feature>
<feature type="binding site" evidence="1">
    <location>
        <position position="68"/>
    </location>
    <ligand>
        <name>Mg(2+)</name>
        <dbReference type="ChEBI" id="CHEBI:18420"/>
    </ligand>
</feature>
<feature type="binding site" evidence="1">
    <location>
        <begin position="84"/>
        <end position="87"/>
    </location>
    <ligand>
        <name>GTP</name>
        <dbReference type="ChEBI" id="CHEBI:37565"/>
    </ligand>
</feature>
<feature type="binding site" evidence="1">
    <location>
        <begin position="151"/>
        <end position="154"/>
    </location>
    <ligand>
        <name>GTP</name>
        <dbReference type="ChEBI" id="CHEBI:37565"/>
    </ligand>
</feature>
<feature type="binding site" evidence="1">
    <location>
        <begin position="184"/>
        <end position="186"/>
    </location>
    <ligand>
        <name>GTP</name>
        <dbReference type="ChEBI" id="CHEBI:37565"/>
    </ligand>
</feature>
<sequence length="219" mass="24440">MTESHIDFRRAKFLISAPDIAHLDQYLPGDVGVEIAFAGRSNAGKSSALNALTEQKNLARTSKTPGRTQLINVFELDAQRRLVDLPGYGFAQVPLAMKLKWQQSLGEYLQKRACLSGVVVLMDIRHPLKDLDMQMIEWAVASEIPVLALLTKSDKLAQSAKMKTVNEVRKALVEFGDWVQVEPFSALKGTGKPKVLSILNEWCHPQWLADELENQDDAE</sequence>
<accession>Q0HD98</accession>
<evidence type="ECO:0000255" key="1">
    <source>
        <dbReference type="HAMAP-Rule" id="MF_00321"/>
    </source>
</evidence>
<organism>
    <name type="scientific">Shewanella sp. (strain MR-4)</name>
    <dbReference type="NCBI Taxonomy" id="60480"/>
    <lineage>
        <taxon>Bacteria</taxon>
        <taxon>Pseudomonadati</taxon>
        <taxon>Pseudomonadota</taxon>
        <taxon>Gammaproteobacteria</taxon>
        <taxon>Alteromonadales</taxon>
        <taxon>Shewanellaceae</taxon>
        <taxon>Shewanella</taxon>
    </lineage>
</organism>
<gene>
    <name evidence="1" type="primary">engB</name>
    <name type="ordered locus">Shewmr4_3906</name>
</gene>
<proteinExistence type="inferred from homology"/>
<name>ENGB_SHESM</name>
<protein>
    <recommendedName>
        <fullName evidence="1">Probable GTP-binding protein EngB</fullName>
    </recommendedName>
</protein>
<reference key="1">
    <citation type="submission" date="2006-08" db="EMBL/GenBank/DDBJ databases">
        <title>Complete sequence of Shewanella sp. MR-4.</title>
        <authorList>
            <consortium name="US DOE Joint Genome Institute"/>
            <person name="Copeland A."/>
            <person name="Lucas S."/>
            <person name="Lapidus A."/>
            <person name="Barry K."/>
            <person name="Detter J.C."/>
            <person name="Glavina del Rio T."/>
            <person name="Hammon N."/>
            <person name="Israni S."/>
            <person name="Dalin E."/>
            <person name="Tice H."/>
            <person name="Pitluck S."/>
            <person name="Kiss H."/>
            <person name="Brettin T."/>
            <person name="Bruce D."/>
            <person name="Han C."/>
            <person name="Tapia R."/>
            <person name="Gilna P."/>
            <person name="Schmutz J."/>
            <person name="Larimer F."/>
            <person name="Land M."/>
            <person name="Hauser L."/>
            <person name="Kyrpides N."/>
            <person name="Mikhailova N."/>
            <person name="Nealson K."/>
            <person name="Konstantinidis K."/>
            <person name="Klappenbach J."/>
            <person name="Tiedje J."/>
            <person name="Richardson P."/>
        </authorList>
    </citation>
    <scope>NUCLEOTIDE SEQUENCE [LARGE SCALE GENOMIC DNA]</scope>
    <source>
        <strain>MR-4</strain>
    </source>
</reference>
<keyword id="KW-0131">Cell cycle</keyword>
<keyword id="KW-0132">Cell division</keyword>
<keyword id="KW-0342">GTP-binding</keyword>
<keyword id="KW-0460">Magnesium</keyword>
<keyword id="KW-0479">Metal-binding</keyword>
<keyword id="KW-0547">Nucleotide-binding</keyword>
<keyword id="KW-0717">Septation</keyword>
<comment type="function">
    <text evidence="1">Necessary for normal cell division and for the maintenance of normal septation.</text>
</comment>
<comment type="cofactor">
    <cofactor evidence="1">
        <name>Mg(2+)</name>
        <dbReference type="ChEBI" id="CHEBI:18420"/>
    </cofactor>
</comment>
<comment type="similarity">
    <text evidence="1">Belongs to the TRAFAC class TrmE-Era-EngA-EngB-Septin-like GTPase superfamily. EngB GTPase family.</text>
</comment>